<feature type="signal peptide" evidence="1">
    <location>
        <begin position="1"/>
        <end position="22"/>
    </location>
</feature>
<feature type="chain" id="PRO_0000440646" description="Secreted Ly-6/uPAR domain-containing protein 2">
    <location>
        <begin position="23"/>
        <end position="97"/>
    </location>
</feature>
<feature type="domain" description="UPAR/Ly6" evidence="1">
    <location>
        <begin position="25"/>
        <end position="95"/>
    </location>
</feature>
<feature type="disulfide bond" evidence="5 9">
    <location>
        <begin position="25"/>
        <end position="47"/>
    </location>
</feature>
<feature type="disulfide bond" evidence="5 9">
    <location>
        <begin position="28"/>
        <end position="34"/>
    </location>
</feature>
<feature type="disulfide bond" evidence="5 9">
    <location>
        <begin position="40"/>
        <end position="68"/>
    </location>
</feature>
<feature type="disulfide bond" evidence="5 9">
    <location>
        <begin position="72"/>
        <end position="88"/>
    </location>
</feature>
<feature type="disulfide bond" evidence="5 9">
    <location>
        <begin position="89"/>
        <end position="94"/>
    </location>
</feature>
<feature type="strand" evidence="10">
    <location>
        <begin position="24"/>
        <end position="26"/>
    </location>
</feature>
<feature type="turn" evidence="10">
    <location>
        <begin position="31"/>
        <end position="33"/>
    </location>
</feature>
<feature type="strand" evidence="10">
    <location>
        <begin position="37"/>
        <end position="39"/>
    </location>
</feature>
<feature type="strand" evidence="10">
    <location>
        <begin position="46"/>
        <end position="52"/>
    </location>
</feature>
<feature type="strand" evidence="10">
    <location>
        <begin position="63"/>
        <end position="71"/>
    </location>
</feature>
<feature type="helix" evidence="10">
    <location>
        <begin position="76"/>
        <end position="78"/>
    </location>
</feature>
<feature type="strand" evidence="10">
    <location>
        <begin position="81"/>
        <end position="83"/>
    </location>
</feature>
<feature type="strand" evidence="10">
    <location>
        <begin position="85"/>
        <end position="91"/>
    </location>
</feature>
<feature type="turn" evidence="10">
    <location>
        <begin position="92"/>
        <end position="95"/>
    </location>
</feature>
<organism>
    <name type="scientific">Homo sapiens</name>
    <name type="common">Human</name>
    <dbReference type="NCBI Taxonomy" id="9606"/>
    <lineage>
        <taxon>Eukaryota</taxon>
        <taxon>Metazoa</taxon>
        <taxon>Chordata</taxon>
        <taxon>Craniata</taxon>
        <taxon>Vertebrata</taxon>
        <taxon>Euteleostomi</taxon>
        <taxon>Mammalia</taxon>
        <taxon>Eutheria</taxon>
        <taxon>Euarchontoglires</taxon>
        <taxon>Primates</taxon>
        <taxon>Haplorrhini</taxon>
        <taxon>Catarrhini</taxon>
        <taxon>Hominidae</taxon>
        <taxon>Homo</taxon>
    </lineage>
</organism>
<proteinExistence type="evidence at protein level"/>
<protein>
    <recommendedName>
        <fullName evidence="7">Secreted Ly-6/uPAR domain-containing protein 2</fullName>
    </recommendedName>
    <alternativeName>
        <fullName evidence="8">Secreted LY6/PLAUR domain-containing protein 2</fullName>
    </alternativeName>
    <alternativeName>
        <fullName evidence="6">Secreted Ly-6/uPAR-related protein 2</fullName>
        <shortName evidence="6">SLURP-2</shortName>
    </alternativeName>
</protein>
<keyword id="KW-0002">3D-structure</keyword>
<keyword id="KW-1015">Disulfide bond</keyword>
<keyword id="KW-1267">Proteomics identification</keyword>
<keyword id="KW-1185">Reference proteome</keyword>
<keyword id="KW-0964">Secreted</keyword>
<keyword id="KW-0732">Signal</keyword>
<sequence>MQLGTGLLLAAVLSLQLAAAEAIWCHQCTGFGGCSHGSRCLRDSTHCVTTATRVLSNTEDLPLVTKMCHIGCPDIPSLGLGPYVSIACCQTSLCNHD</sequence>
<evidence type="ECO:0000255" key="1"/>
<evidence type="ECO:0000269" key="2">
    <source>
    </source>
</evidence>
<evidence type="ECO:0000269" key="3">
    <source>
    </source>
</evidence>
<evidence type="ECO:0000269" key="4">
    <source>
    </source>
</evidence>
<evidence type="ECO:0000269" key="5">
    <source>
    </source>
</evidence>
<evidence type="ECO:0000303" key="6">
    <source>
    </source>
</evidence>
<evidence type="ECO:0000305" key="7"/>
<evidence type="ECO:0000312" key="8">
    <source>
        <dbReference type="HGNC" id="HGNC:25549"/>
    </source>
</evidence>
<evidence type="ECO:0007744" key="9">
    <source>
        <dbReference type="PDB" id="2N99"/>
    </source>
</evidence>
<evidence type="ECO:0007829" key="10">
    <source>
        <dbReference type="PDB" id="2N99"/>
    </source>
</evidence>
<dbReference type="EMBL" id="AB081838">
    <property type="protein sequence ID" value="BAC56859.1"/>
    <property type="molecule type" value="mRNA"/>
</dbReference>
<dbReference type="EMBL" id="AY587277">
    <property type="protein sequence ID" value="AAT00512.1"/>
    <property type="molecule type" value="mRNA"/>
</dbReference>
<dbReference type="EMBL" id="AY358417">
    <property type="protein sequence ID" value="AAQ88783.1"/>
    <property type="molecule type" value="mRNA"/>
</dbReference>
<dbReference type="EMBL" id="AC083841">
    <property type="status" value="NOT_ANNOTATED_CDS"/>
    <property type="molecule type" value="Genomic_DNA"/>
</dbReference>
<dbReference type="EMBL" id="CH471162">
    <property type="protein sequence ID" value="EAW82306.1"/>
    <property type="molecule type" value="Genomic_DNA"/>
</dbReference>
<dbReference type="CCDS" id="CCDS34952.1"/>
<dbReference type="RefSeq" id="NP_803253.1">
    <property type="nucleotide sequence ID" value="NM_177458.3"/>
</dbReference>
<dbReference type="PDB" id="2N99">
    <property type="method" value="NMR"/>
    <property type="chains" value="A=23-97"/>
</dbReference>
<dbReference type="PDBsum" id="2N99"/>
<dbReference type="SMR" id="P0DP57"/>
<dbReference type="FunCoup" id="P0DP57">
    <property type="interactions" value="436"/>
</dbReference>
<dbReference type="IntAct" id="P0DP57">
    <property type="interactions" value="1"/>
</dbReference>
<dbReference type="STRING" id="9606.ENSP00000319846"/>
<dbReference type="BioMuta" id="SLURP2"/>
<dbReference type="jPOST" id="P0DP57"/>
<dbReference type="MassIVE" id="P0DP57"/>
<dbReference type="PeptideAtlas" id="P0DP57"/>
<dbReference type="Pumba" id="P0DP57"/>
<dbReference type="DNASU" id="432355"/>
<dbReference type="Ensembl" id="ENST00000317543.12">
    <property type="protein sequence ID" value="ENSP00000319846.7"/>
    <property type="gene ID" value="ENSG00000283992.2"/>
</dbReference>
<dbReference type="GeneID" id="432355"/>
<dbReference type="KEGG" id="hsa:432355"/>
<dbReference type="MANE-Select" id="ENST00000317543.12">
    <property type="protein sequence ID" value="ENSP00000319846.7"/>
    <property type="RefSeq nucleotide sequence ID" value="NM_177458.3"/>
    <property type="RefSeq protein sequence ID" value="NP_803253.1"/>
</dbReference>
<dbReference type="AGR" id="HGNC:25549"/>
<dbReference type="CTD" id="432355"/>
<dbReference type="DisGeNET" id="432355"/>
<dbReference type="GeneCards" id="SLURP2"/>
<dbReference type="HGNC" id="HGNC:25549">
    <property type="gene designation" value="SLURP2"/>
</dbReference>
<dbReference type="HPA" id="ENSG00000283992">
    <property type="expression patterns" value="Tissue enhanced (esophagus, skin, vagina)"/>
</dbReference>
<dbReference type="MIM" id="606110">
    <property type="type" value="gene"/>
</dbReference>
<dbReference type="neXtProt" id="NX_P0DP57"/>
<dbReference type="VEuPathDB" id="HostDB:ENSG00000283992"/>
<dbReference type="GeneTree" id="ENSGT00940000164325"/>
<dbReference type="InParanoid" id="P0DP57"/>
<dbReference type="OMA" id="CHQCQGF"/>
<dbReference type="OrthoDB" id="9532969at2759"/>
<dbReference type="PAN-GO" id="P0DP57">
    <property type="GO annotations" value="3 GO annotations based on evolutionary models"/>
</dbReference>
<dbReference type="PathwayCommons" id="P0DP57"/>
<dbReference type="SignaLink" id="P0DP57"/>
<dbReference type="GenomeRNAi" id="66004"/>
<dbReference type="Pharos" id="P0DP57">
    <property type="development level" value="Tbio"/>
</dbReference>
<dbReference type="PRO" id="PR:P0DP57"/>
<dbReference type="Proteomes" id="UP000005640">
    <property type="component" value="Chromosome 8"/>
</dbReference>
<dbReference type="RNAct" id="P0DP57">
    <property type="molecule type" value="protein"/>
</dbReference>
<dbReference type="Bgee" id="ENSG00000283992">
    <property type="expression patterns" value="Expressed in lower esophagus mucosa and 83 other cell types or tissues"/>
</dbReference>
<dbReference type="ExpressionAtlas" id="P0DP57">
    <property type="expression patterns" value="baseline and differential"/>
</dbReference>
<dbReference type="GO" id="GO:0005615">
    <property type="term" value="C:extracellular space"/>
    <property type="evidence" value="ECO:0000314"/>
    <property type="project" value="UniProtKB"/>
</dbReference>
<dbReference type="GO" id="GO:0005886">
    <property type="term" value="C:plasma membrane"/>
    <property type="evidence" value="ECO:0000318"/>
    <property type="project" value="GO_Central"/>
</dbReference>
<dbReference type="GO" id="GO:0045202">
    <property type="term" value="C:synapse"/>
    <property type="evidence" value="ECO:0007669"/>
    <property type="project" value="GOC"/>
</dbReference>
<dbReference type="GO" id="GO:0033130">
    <property type="term" value="F:acetylcholine receptor binding"/>
    <property type="evidence" value="ECO:0000314"/>
    <property type="project" value="UniProtKB"/>
</dbReference>
<dbReference type="GO" id="GO:0030550">
    <property type="term" value="F:acetylcholine receptor inhibitor activity"/>
    <property type="evidence" value="ECO:0000318"/>
    <property type="project" value="GO_Central"/>
</dbReference>
<dbReference type="GO" id="GO:0030548">
    <property type="term" value="F:acetylcholine receptor regulator activity"/>
    <property type="evidence" value="ECO:0000314"/>
    <property type="project" value="UniProtKB"/>
</dbReference>
<dbReference type="GO" id="GO:0095500">
    <property type="term" value="P:acetylcholine receptor signaling pathway"/>
    <property type="evidence" value="ECO:0000314"/>
    <property type="project" value="UniProtKB"/>
</dbReference>
<dbReference type="GO" id="GO:0099601">
    <property type="term" value="P:regulation of neurotransmitter receptor activity"/>
    <property type="evidence" value="ECO:0000314"/>
    <property type="project" value="UniProtKB"/>
</dbReference>
<dbReference type="CDD" id="cd23561">
    <property type="entry name" value="TFP_LU_ECD_SLURP2"/>
    <property type="match status" value="1"/>
</dbReference>
<dbReference type="FunFam" id="2.10.60.10:FF:000026">
    <property type="entry name" value="Secreted Ly-6/uPAR domain-containing protein 2"/>
    <property type="match status" value="1"/>
</dbReference>
<dbReference type="Gene3D" id="2.10.60.10">
    <property type="entry name" value="CD59"/>
    <property type="match status" value="1"/>
</dbReference>
<dbReference type="InterPro" id="IPR051110">
    <property type="entry name" value="Ly-6/neurotoxin-like_GPI-ap"/>
</dbReference>
<dbReference type="InterPro" id="IPR016054">
    <property type="entry name" value="LY6_UPA_recep-like"/>
</dbReference>
<dbReference type="InterPro" id="IPR045860">
    <property type="entry name" value="Snake_toxin-like_sf"/>
</dbReference>
<dbReference type="PANTHER" id="PTHR16983:SF14">
    <property type="entry name" value="SECRETED LY-6_UPAR DOMAIN-CONTAINING PROTEIN 2"/>
    <property type="match status" value="1"/>
</dbReference>
<dbReference type="PANTHER" id="PTHR16983">
    <property type="entry name" value="UPAR/LY6 DOMAIN-CONTAINING PROTEIN"/>
    <property type="match status" value="1"/>
</dbReference>
<dbReference type="Pfam" id="PF00021">
    <property type="entry name" value="UPAR_LY6"/>
    <property type="match status" value="1"/>
</dbReference>
<dbReference type="SUPFAM" id="SSF57302">
    <property type="entry name" value="Snake toxin-like"/>
    <property type="match status" value="1"/>
</dbReference>
<name>SLUR2_HUMAN</name>
<accession>P0DP57</accession>
<accession>D3DWI7</accession>
<accession>G3XAC2</accession>
<accession>Q86SR0</accession>
<accession>Q9BZG9</accession>
<gene>
    <name evidence="8" type="primary">SLURP2</name>
</gene>
<comment type="function">
    <text evidence="3 5">Binds and may modulate the functional properties of nicotinic and muscarinic acetylcholine receptors. May regulate keratinocytes proliferation, differentiation and apoptosis. In vitro moderately inhibits ACh-evoked currents of alpha-3:beta-2-containing nAChRs and strongly these of alpha-4:beta-2-containing nAChRs, modulates alpha-7-containing nAChRs, and inhibits nicotine-induced signaling probably implicating alpha-3:beta-4-containing nAChRs. Proposed to act on alpha-3:beta-2 and alpha-7 nAChRs in an orthosteric, and on mAChRs, such as CHRM1 and CHRM3, in an allosteric manner.</text>
</comment>
<comment type="subunit">
    <text evidence="5">Interacts with CHRNA3, CHRNA4, CHRNA5, CHRNA7, CHRNB2 and CHRNB4. Interacts with CHRM1 and CHRM3 probably in an allosteric manner (PubMed:27485575).</text>
</comment>
<comment type="subcellular location">
    <subcellularLocation>
        <location evidence="3">Secreted</location>
    </subcellularLocation>
</comment>
<comment type="tissue specificity">
    <text evidence="2 3">Expressed at highest levels in cervix and esophagus, followed by adult and fetal skin. Expressed at lower levels in brain, lung, stomach, small intestine, colon, rectum, uterus, and thymus. Not detected in spleen nor bone marrow. Up-regulated 3-fold in psoriatic lesional skin (PubMed:12573258). In the epidermis, predominantly produced by keratinocytes of the suprabasal epidermal compartment (at protein level) (PubMed:16575903). In attached gingiva, produced at highest levels by basal cells located in the lowermost epithelial layers (at protein level) (PubMed:16575903). Detected in serum (at protein level) (PubMed:16575903).</text>
</comment>
<comment type="induction">
    <text evidence="4">Up-regulation by IL22/interleukin-22 is suppressed by IFNG/Interferon gamma (at protein level).</text>
</comment>
<reference key="1">
    <citation type="journal article" date="2003" name="Genomics">
        <title>SLURP-2, a novel member of the human Ly-6 superfamily that is up-regulated in psoriasis vulgaris.</title>
        <authorList>
            <person name="Tsuji H."/>
            <person name="Okamoto K."/>
            <person name="Matsuzaka Y."/>
            <person name="Iizuka H."/>
            <person name="Tamiya G."/>
            <person name="Inoko H."/>
        </authorList>
    </citation>
    <scope>NUCLEOTIDE SEQUENCE [MRNA]</scope>
    <scope>TISSUE SPECIFICITY</scope>
    <source>
        <tissue>Skin</tissue>
    </source>
</reference>
<reference key="2">
    <citation type="journal article" date="2006" name="J. Cell. Physiol.">
        <title>SLURP-2: a novel cholinergic signaling peptide in human mucocutaneous epithelium.</title>
        <authorList>
            <person name="Arredondo J."/>
            <person name="Chernyavsky A.I."/>
            <person name="Jolkovsky D.L."/>
            <person name="Webber R.J."/>
            <person name="Grando S.A."/>
        </authorList>
    </citation>
    <scope>NUCLEOTIDE SEQUENCE [MRNA]</scope>
    <scope>FUNCTION</scope>
    <scope>SUBCELLULAR LOCATION</scope>
    <scope>TISSUE SPECIFICITY</scope>
</reference>
<reference key="3">
    <citation type="journal article" date="2003" name="Genome Res.">
        <title>The secreted protein discovery initiative (SPDI), a large-scale effort to identify novel human secreted and transmembrane proteins: a bioinformatics assessment.</title>
        <authorList>
            <person name="Clark H.F."/>
            <person name="Gurney A.L."/>
            <person name="Abaya E."/>
            <person name="Baker K."/>
            <person name="Baldwin D.T."/>
            <person name="Brush J."/>
            <person name="Chen J."/>
            <person name="Chow B."/>
            <person name="Chui C."/>
            <person name="Crowley C."/>
            <person name="Currell B."/>
            <person name="Deuel B."/>
            <person name="Dowd P."/>
            <person name="Eaton D."/>
            <person name="Foster J.S."/>
            <person name="Grimaldi C."/>
            <person name="Gu Q."/>
            <person name="Hass P.E."/>
            <person name="Heldens S."/>
            <person name="Huang A."/>
            <person name="Kim H.S."/>
            <person name="Klimowski L."/>
            <person name="Jin Y."/>
            <person name="Johnson S."/>
            <person name="Lee J."/>
            <person name="Lewis L."/>
            <person name="Liao D."/>
            <person name="Mark M.R."/>
            <person name="Robbie E."/>
            <person name="Sanchez C."/>
            <person name="Schoenfeld J."/>
            <person name="Seshagiri S."/>
            <person name="Simmons L."/>
            <person name="Singh J."/>
            <person name="Smith V."/>
            <person name="Stinson J."/>
            <person name="Vagts A."/>
            <person name="Vandlen R.L."/>
            <person name="Watanabe C."/>
            <person name="Wieand D."/>
            <person name="Woods K."/>
            <person name="Xie M.-H."/>
            <person name="Yansura D.G."/>
            <person name="Yi S."/>
            <person name="Yu G."/>
            <person name="Yuan J."/>
            <person name="Zhang M."/>
            <person name="Zhang Z."/>
            <person name="Goddard A.D."/>
            <person name="Wood W.I."/>
            <person name="Godowski P.J."/>
            <person name="Gray A.M."/>
        </authorList>
    </citation>
    <scope>NUCLEOTIDE SEQUENCE [LARGE SCALE MRNA]</scope>
</reference>
<reference key="4">
    <citation type="journal article" date="2006" name="Nature">
        <title>DNA sequence and analysis of human chromosome 8.</title>
        <authorList>
            <person name="Nusbaum C."/>
            <person name="Mikkelsen T.S."/>
            <person name="Zody M.C."/>
            <person name="Asakawa S."/>
            <person name="Taudien S."/>
            <person name="Garber M."/>
            <person name="Kodira C.D."/>
            <person name="Schueler M.G."/>
            <person name="Shimizu A."/>
            <person name="Whittaker C.A."/>
            <person name="Chang J.L."/>
            <person name="Cuomo C.A."/>
            <person name="Dewar K."/>
            <person name="FitzGerald M.G."/>
            <person name="Yang X."/>
            <person name="Allen N.R."/>
            <person name="Anderson S."/>
            <person name="Asakawa T."/>
            <person name="Blechschmidt K."/>
            <person name="Bloom T."/>
            <person name="Borowsky M.L."/>
            <person name="Butler J."/>
            <person name="Cook A."/>
            <person name="Corum B."/>
            <person name="DeArellano K."/>
            <person name="DeCaprio D."/>
            <person name="Dooley K.T."/>
            <person name="Dorris L. III"/>
            <person name="Engels R."/>
            <person name="Gloeckner G."/>
            <person name="Hafez N."/>
            <person name="Hagopian D.S."/>
            <person name="Hall J.L."/>
            <person name="Ishikawa S.K."/>
            <person name="Jaffe D.B."/>
            <person name="Kamat A."/>
            <person name="Kudoh J."/>
            <person name="Lehmann R."/>
            <person name="Lokitsang T."/>
            <person name="Macdonald P."/>
            <person name="Major J.E."/>
            <person name="Matthews C.D."/>
            <person name="Mauceli E."/>
            <person name="Menzel U."/>
            <person name="Mihalev A.H."/>
            <person name="Minoshima S."/>
            <person name="Murayama Y."/>
            <person name="Naylor J.W."/>
            <person name="Nicol R."/>
            <person name="Nguyen C."/>
            <person name="O'Leary S.B."/>
            <person name="O'Neill K."/>
            <person name="Parker S.C.J."/>
            <person name="Polley A."/>
            <person name="Raymond C.K."/>
            <person name="Reichwald K."/>
            <person name="Rodriguez J."/>
            <person name="Sasaki T."/>
            <person name="Schilhabel M."/>
            <person name="Siddiqui R."/>
            <person name="Smith C.L."/>
            <person name="Sneddon T.P."/>
            <person name="Talamas J.A."/>
            <person name="Tenzin P."/>
            <person name="Topham K."/>
            <person name="Venkataraman V."/>
            <person name="Wen G."/>
            <person name="Yamazaki S."/>
            <person name="Young S.K."/>
            <person name="Zeng Q."/>
            <person name="Zimmer A.R."/>
            <person name="Rosenthal A."/>
            <person name="Birren B.W."/>
            <person name="Platzer M."/>
            <person name="Shimizu N."/>
            <person name="Lander E.S."/>
        </authorList>
    </citation>
    <scope>NUCLEOTIDE SEQUENCE [LARGE SCALE GENOMIC DNA]</scope>
</reference>
<reference key="5">
    <citation type="submission" date="2005-09" db="EMBL/GenBank/DDBJ databases">
        <authorList>
            <person name="Mural R.J."/>
            <person name="Istrail S."/>
            <person name="Sutton G.G."/>
            <person name="Florea L."/>
            <person name="Halpern A.L."/>
            <person name="Mobarry C.M."/>
            <person name="Lippert R."/>
            <person name="Walenz B."/>
            <person name="Shatkay H."/>
            <person name="Dew I."/>
            <person name="Miller J.R."/>
            <person name="Flanigan M.J."/>
            <person name="Edwards N.J."/>
            <person name="Bolanos R."/>
            <person name="Fasulo D."/>
            <person name="Halldorsson B.V."/>
            <person name="Hannenhalli S."/>
            <person name="Turner R."/>
            <person name="Yooseph S."/>
            <person name="Lu F."/>
            <person name="Nusskern D.R."/>
            <person name="Shue B.C."/>
            <person name="Zheng X.H."/>
            <person name="Zhong F."/>
            <person name="Delcher A.L."/>
            <person name="Huson D.H."/>
            <person name="Kravitz S.A."/>
            <person name="Mouchard L."/>
            <person name="Reinert K."/>
            <person name="Remington K.A."/>
            <person name="Clark A.G."/>
            <person name="Waterman M.S."/>
            <person name="Eichler E.E."/>
            <person name="Adams M.D."/>
            <person name="Hunkapiller M.W."/>
            <person name="Myers E.W."/>
            <person name="Venter J.C."/>
        </authorList>
    </citation>
    <scope>NUCLEOTIDE SEQUENCE [LARGE SCALE GENOMIC DNA]</scope>
</reference>
<reference key="6">
    <citation type="journal article" date="2015" name="Int. Immunopharmacol.">
        <title>Transcriptional regulation of SLURP2, a psoriasis-associated gene, is under control of IL-22 in the skin: A special reference to the nested gene LYNX1.</title>
        <authorList>
            <person name="Moriwaki Y."/>
            <person name="Takada K."/>
            <person name="Tsuji S."/>
            <person name="Kawashima K."/>
            <person name="Misawa H."/>
        </authorList>
    </citation>
    <scope>INDUCTION</scope>
</reference>
<reference key="7">
    <citation type="journal article" date="2016" name="Sci. Rep.">
        <title>Secreted isoform of human Lynx1 (SLURP-2): spatial structure and pharmacology of interactions with different types of acetylcholine receptors.</title>
        <authorList>
            <person name="Lyukmanova E.N."/>
            <person name="Shulepko M.A."/>
            <person name="Shenkarev Z.O."/>
            <person name="Bychkov M.L."/>
            <person name="Paramonov A.S."/>
            <person name="Chugunov A.O."/>
            <person name="Kulbatskii D.S."/>
            <person name="Arvaniti M."/>
            <person name="Dolejsi E."/>
            <person name="Schaer T."/>
            <person name="Arseniev A.S."/>
            <person name="Efremov R.G."/>
            <person name="Thomsen M.S."/>
            <person name="Dolezal V."/>
            <person name="Bertrand D."/>
            <person name="Dolgikh D.A."/>
            <person name="Kirpichnikov M.P."/>
        </authorList>
    </citation>
    <scope>STRUCTURE BY NMR OF 23-97</scope>
    <scope>DISULFIDE BONDS</scope>
    <scope>FUNCTION</scope>
    <scope>INTERACTION WITH CHRNA3; CHRNA4; CHRNA5; CHRNA7; CHRNB2; CHRNB4; CHRM1 AND CHRM3</scope>
</reference>